<dbReference type="EMBL" id="CP000243">
    <property type="protein sequence ID" value="ABE08190.1"/>
    <property type="molecule type" value="Genomic_DNA"/>
</dbReference>
<dbReference type="RefSeq" id="WP_000186369.1">
    <property type="nucleotide sequence ID" value="NZ_CP064825.1"/>
</dbReference>
<dbReference type="SMR" id="Q1R8X4"/>
<dbReference type="KEGG" id="eci:UTI89_C2724"/>
<dbReference type="HOGENOM" id="CLU_020088_2_0_6"/>
<dbReference type="Proteomes" id="UP000001952">
    <property type="component" value="Chromosome"/>
</dbReference>
<dbReference type="GO" id="GO:0005886">
    <property type="term" value="C:plasma membrane"/>
    <property type="evidence" value="ECO:0007669"/>
    <property type="project" value="UniProtKB-SubCell"/>
</dbReference>
<dbReference type="GO" id="GO:0015086">
    <property type="term" value="F:cadmium ion transmembrane transporter activity"/>
    <property type="evidence" value="ECO:0007669"/>
    <property type="project" value="TreeGrafter"/>
</dbReference>
<dbReference type="GO" id="GO:0005384">
    <property type="term" value="F:manganese ion transmembrane transporter activity"/>
    <property type="evidence" value="ECO:0007669"/>
    <property type="project" value="TreeGrafter"/>
</dbReference>
<dbReference type="GO" id="GO:0046872">
    <property type="term" value="F:metal ion binding"/>
    <property type="evidence" value="ECO:0007669"/>
    <property type="project" value="UniProtKB-UniRule"/>
</dbReference>
<dbReference type="GO" id="GO:0015293">
    <property type="term" value="F:symporter activity"/>
    <property type="evidence" value="ECO:0007669"/>
    <property type="project" value="UniProtKB-UniRule"/>
</dbReference>
<dbReference type="GO" id="GO:0034755">
    <property type="term" value="P:iron ion transmembrane transport"/>
    <property type="evidence" value="ECO:0007669"/>
    <property type="project" value="TreeGrafter"/>
</dbReference>
<dbReference type="HAMAP" id="MF_00221">
    <property type="entry name" value="NRAMP"/>
    <property type="match status" value="1"/>
</dbReference>
<dbReference type="InterPro" id="IPR001046">
    <property type="entry name" value="NRAMP_fam"/>
</dbReference>
<dbReference type="NCBIfam" id="TIGR01197">
    <property type="entry name" value="nramp"/>
    <property type="match status" value="1"/>
</dbReference>
<dbReference type="NCBIfam" id="NF037982">
    <property type="entry name" value="Nramp_1"/>
    <property type="match status" value="1"/>
</dbReference>
<dbReference type="NCBIfam" id="NF001923">
    <property type="entry name" value="PRK00701.1"/>
    <property type="match status" value="1"/>
</dbReference>
<dbReference type="PANTHER" id="PTHR11706:SF33">
    <property type="entry name" value="NATURAL RESISTANCE-ASSOCIATED MACROPHAGE PROTEIN 2"/>
    <property type="match status" value="1"/>
</dbReference>
<dbReference type="PANTHER" id="PTHR11706">
    <property type="entry name" value="SOLUTE CARRIER PROTEIN FAMILY 11 MEMBER"/>
    <property type="match status" value="1"/>
</dbReference>
<dbReference type="Pfam" id="PF01566">
    <property type="entry name" value="Nramp"/>
    <property type="match status" value="1"/>
</dbReference>
<dbReference type="PRINTS" id="PR00447">
    <property type="entry name" value="NATRESASSCMP"/>
</dbReference>
<sequence>MTNYRVESSSGRAARKMRLALMGPAFIAAIGYIDPGNFATNIQAGASFGYQLLWVVVWANLMAMLIQILSAKLGIATGKNLAEQIRDHYPRPVVWFYWVQAEIIAMATDLAEFIGAAIGFKLILGVSLLQGAVLTGIATFLILMLQRRGQKPLEKVIGGLLLFVAAAYIVELIFSQPNLAQLGKGMVIPSLPTSEAVFLAAGVLGATIMPHVIYLHSSLTQHLHGGSRQQRYSATKWDVAIAMTIAGFVNLAMMATAAAAFHFSGHTGVADLDEAYLTLQPLLSHAAATVFGLSLVAAGLSSTVVGTLAGQVVMQGFIRFHIPLWVRRTVTMLPSFIVILMGLDPTRILVMSQVLLSFGIALALVPLLIFTSDSKLMGDLVNSKRVKQTGWVIVVLVVALNIWLLVGTALGL</sequence>
<reference key="1">
    <citation type="journal article" date="2006" name="Proc. Natl. Acad. Sci. U.S.A.">
        <title>Identification of genes subject to positive selection in uropathogenic strains of Escherichia coli: a comparative genomics approach.</title>
        <authorList>
            <person name="Chen S.L."/>
            <person name="Hung C.-S."/>
            <person name="Xu J."/>
            <person name="Reigstad C.S."/>
            <person name="Magrini V."/>
            <person name="Sabo A."/>
            <person name="Blasiar D."/>
            <person name="Bieri T."/>
            <person name="Meyer R.R."/>
            <person name="Ozersky P."/>
            <person name="Armstrong J.R."/>
            <person name="Fulton R.S."/>
            <person name="Latreille J.P."/>
            <person name="Spieth J."/>
            <person name="Hooton T.M."/>
            <person name="Mardis E.R."/>
            <person name="Hultgren S.J."/>
            <person name="Gordon J.I."/>
        </authorList>
    </citation>
    <scope>NUCLEOTIDE SEQUENCE [LARGE SCALE GENOMIC DNA]</scope>
    <source>
        <strain>UTI89 / UPEC</strain>
    </source>
</reference>
<proteinExistence type="inferred from homology"/>
<accession>Q1R8X4</accession>
<feature type="chain" id="PRO_1000024102" description="Divalent metal cation transporter MntH">
    <location>
        <begin position="1"/>
        <end position="412"/>
    </location>
</feature>
<feature type="topological domain" description="Cytoplasmic" evidence="1">
    <location>
        <begin position="1"/>
        <end position="19"/>
    </location>
</feature>
<feature type="transmembrane region" description="Helical" evidence="1">
    <location>
        <begin position="20"/>
        <end position="39"/>
    </location>
</feature>
<feature type="topological domain" description="Periplasmic" evidence="1">
    <location>
        <begin position="40"/>
        <end position="51"/>
    </location>
</feature>
<feature type="transmembrane region" description="Helical" evidence="1">
    <location>
        <begin position="52"/>
        <end position="71"/>
    </location>
</feature>
<feature type="topological domain" description="Cytoplasmic" evidence="1">
    <location>
        <begin position="72"/>
        <end position="95"/>
    </location>
</feature>
<feature type="transmembrane region" description="Helical" evidence="1">
    <location>
        <begin position="96"/>
        <end position="118"/>
    </location>
</feature>
<feature type="topological domain" description="Periplasmic" evidence="1">
    <location>
        <begin position="119"/>
        <end position="125"/>
    </location>
</feature>
<feature type="transmembrane region" description="Helical" evidence="1">
    <location>
        <begin position="126"/>
        <end position="145"/>
    </location>
</feature>
<feature type="topological domain" description="Cytoplasmic" evidence="1">
    <location>
        <begin position="146"/>
        <end position="155"/>
    </location>
</feature>
<feature type="transmembrane region" description="Helical" evidence="1">
    <location>
        <begin position="156"/>
        <end position="175"/>
    </location>
</feature>
<feature type="topological domain" description="Periplasmic" evidence="1">
    <location>
        <begin position="176"/>
        <end position="196"/>
    </location>
</feature>
<feature type="transmembrane region" description="Helical" evidence="1">
    <location>
        <begin position="197"/>
        <end position="220"/>
    </location>
</feature>
<feature type="topological domain" description="Cytoplasmic" evidence="1">
    <location>
        <begin position="221"/>
        <end position="238"/>
    </location>
</feature>
<feature type="transmembrane region" description="Helical" evidence="1">
    <location>
        <begin position="239"/>
        <end position="258"/>
    </location>
</feature>
<feature type="topological domain" description="Periplasmic" evidence="1">
    <location>
        <begin position="259"/>
        <end position="276"/>
    </location>
</feature>
<feature type="transmembrane region" description="Helical" evidence="1">
    <location>
        <begin position="277"/>
        <end position="297"/>
    </location>
</feature>
<feature type="topological domain" description="Cytoplasmic" evidence="1">
    <location>
        <begin position="298"/>
        <end position="327"/>
    </location>
</feature>
<feature type="transmembrane region" description="Helical" evidence="1">
    <location>
        <begin position="328"/>
        <end position="344"/>
    </location>
</feature>
<feature type="topological domain" description="Periplasmic" evidence="1">
    <location>
        <begin position="345"/>
        <end position="350"/>
    </location>
</feature>
<feature type="transmembrane region" description="Helical" evidence="1">
    <location>
        <begin position="351"/>
        <end position="370"/>
    </location>
</feature>
<feature type="topological domain" description="Cytoplasmic" evidence="1">
    <location>
        <begin position="371"/>
        <end position="387"/>
    </location>
</feature>
<feature type="transmembrane region" description="Helical" evidence="1">
    <location>
        <begin position="388"/>
        <end position="406"/>
    </location>
</feature>
<feature type="topological domain" description="Periplasmic" evidence="1">
    <location>
        <begin position="407"/>
        <end position="412"/>
    </location>
</feature>
<gene>
    <name evidence="1" type="primary">mntH</name>
    <name type="ordered locus">UTI89_C2724</name>
</gene>
<comment type="function">
    <text evidence="1">H(+)-stimulated, divalent metal cation uptake system.</text>
</comment>
<comment type="subcellular location">
    <subcellularLocation>
        <location evidence="1">Cell inner membrane</location>
        <topology evidence="1">Multi-pass membrane protein</topology>
    </subcellularLocation>
</comment>
<comment type="similarity">
    <text evidence="1">Belongs to the NRAMP family.</text>
</comment>
<name>MNTH_ECOUT</name>
<protein>
    <recommendedName>
        <fullName evidence="1">Divalent metal cation transporter MntH</fullName>
    </recommendedName>
</protein>
<keyword id="KW-0997">Cell inner membrane</keyword>
<keyword id="KW-1003">Cell membrane</keyword>
<keyword id="KW-0406">Ion transport</keyword>
<keyword id="KW-0472">Membrane</keyword>
<keyword id="KW-0769">Symport</keyword>
<keyword id="KW-0812">Transmembrane</keyword>
<keyword id="KW-1133">Transmembrane helix</keyword>
<keyword id="KW-0813">Transport</keyword>
<evidence type="ECO:0000255" key="1">
    <source>
        <dbReference type="HAMAP-Rule" id="MF_00221"/>
    </source>
</evidence>
<organism>
    <name type="scientific">Escherichia coli (strain UTI89 / UPEC)</name>
    <dbReference type="NCBI Taxonomy" id="364106"/>
    <lineage>
        <taxon>Bacteria</taxon>
        <taxon>Pseudomonadati</taxon>
        <taxon>Pseudomonadota</taxon>
        <taxon>Gammaproteobacteria</taxon>
        <taxon>Enterobacterales</taxon>
        <taxon>Enterobacteriaceae</taxon>
        <taxon>Escherichia</taxon>
    </lineage>
</organism>